<comment type="similarity">
    <text evidence="1">Belongs to the UPF0235 family.</text>
</comment>
<dbReference type="EMBL" id="CP001108">
    <property type="protein sequence ID" value="ACF46880.1"/>
    <property type="molecule type" value="Genomic_DNA"/>
</dbReference>
<dbReference type="RefSeq" id="WP_012506413.1">
    <property type="nucleotide sequence ID" value="NC_011059.1"/>
</dbReference>
<dbReference type="SMR" id="B4S4I4"/>
<dbReference type="STRING" id="290512.Paes_1868"/>
<dbReference type="KEGG" id="paa:Paes_1868"/>
<dbReference type="eggNOG" id="COG1872">
    <property type="taxonomic scope" value="Bacteria"/>
</dbReference>
<dbReference type="HOGENOM" id="CLU_130694_6_0_10"/>
<dbReference type="Proteomes" id="UP000002725">
    <property type="component" value="Chromosome"/>
</dbReference>
<dbReference type="GO" id="GO:0005737">
    <property type="term" value="C:cytoplasm"/>
    <property type="evidence" value="ECO:0007669"/>
    <property type="project" value="TreeGrafter"/>
</dbReference>
<dbReference type="Gene3D" id="3.30.1200.10">
    <property type="entry name" value="YggU-like"/>
    <property type="match status" value="1"/>
</dbReference>
<dbReference type="HAMAP" id="MF_00634">
    <property type="entry name" value="UPF0235"/>
    <property type="match status" value="1"/>
</dbReference>
<dbReference type="InterPro" id="IPR003746">
    <property type="entry name" value="DUF167"/>
</dbReference>
<dbReference type="InterPro" id="IPR036591">
    <property type="entry name" value="YggU-like_sf"/>
</dbReference>
<dbReference type="NCBIfam" id="TIGR00251">
    <property type="entry name" value="DUF167 family protein"/>
    <property type="match status" value="1"/>
</dbReference>
<dbReference type="PANTHER" id="PTHR13420">
    <property type="entry name" value="UPF0235 PROTEIN C15ORF40"/>
    <property type="match status" value="1"/>
</dbReference>
<dbReference type="PANTHER" id="PTHR13420:SF7">
    <property type="entry name" value="UPF0235 PROTEIN C15ORF40"/>
    <property type="match status" value="1"/>
</dbReference>
<dbReference type="Pfam" id="PF02594">
    <property type="entry name" value="DUF167"/>
    <property type="match status" value="1"/>
</dbReference>
<dbReference type="SMART" id="SM01152">
    <property type="entry name" value="DUF167"/>
    <property type="match status" value="1"/>
</dbReference>
<dbReference type="SUPFAM" id="SSF69786">
    <property type="entry name" value="YggU-like"/>
    <property type="match status" value="1"/>
</dbReference>
<accession>B4S4I4</accession>
<name>Y1868_PROA2</name>
<evidence type="ECO:0000255" key="1">
    <source>
        <dbReference type="HAMAP-Rule" id="MF_00634"/>
    </source>
</evidence>
<organism>
    <name type="scientific">Prosthecochloris aestuarii (strain DSM 271 / SK 413)</name>
    <dbReference type="NCBI Taxonomy" id="290512"/>
    <lineage>
        <taxon>Bacteria</taxon>
        <taxon>Pseudomonadati</taxon>
        <taxon>Chlorobiota</taxon>
        <taxon>Chlorobiia</taxon>
        <taxon>Chlorobiales</taxon>
        <taxon>Chlorobiaceae</taxon>
        <taxon>Prosthecochloris</taxon>
    </lineage>
</organism>
<proteinExistence type="inferred from homology"/>
<sequence>MVRLKEKDGGVVFFVKAQPRSSRSAIIGEYDGKIKISLKAAPVDDAANVECCRFLAKSLGVASSRVRILSGHSSRIKRLTIDGMGAAEAATLFGEHLESVEFDL</sequence>
<feature type="chain" id="PRO_1000130701" description="UPF0235 protein Paes_1868">
    <location>
        <begin position="1"/>
        <end position="104"/>
    </location>
</feature>
<gene>
    <name type="ordered locus">Paes_1868</name>
</gene>
<reference key="1">
    <citation type="submission" date="2008-06" db="EMBL/GenBank/DDBJ databases">
        <title>Complete sequence of chromosome of Prosthecochloris aestuarii DSM 271.</title>
        <authorList>
            <consortium name="US DOE Joint Genome Institute"/>
            <person name="Lucas S."/>
            <person name="Copeland A."/>
            <person name="Lapidus A."/>
            <person name="Glavina del Rio T."/>
            <person name="Dalin E."/>
            <person name="Tice H."/>
            <person name="Bruce D."/>
            <person name="Goodwin L."/>
            <person name="Pitluck S."/>
            <person name="Schmutz J."/>
            <person name="Larimer F."/>
            <person name="Land M."/>
            <person name="Hauser L."/>
            <person name="Kyrpides N."/>
            <person name="Anderson I."/>
            <person name="Liu Z."/>
            <person name="Li T."/>
            <person name="Zhao F."/>
            <person name="Overmann J."/>
            <person name="Bryant D.A."/>
            <person name="Richardson P."/>
        </authorList>
    </citation>
    <scope>NUCLEOTIDE SEQUENCE [LARGE SCALE GENOMIC DNA]</scope>
    <source>
        <strain>DSM 271 / SK 413</strain>
    </source>
</reference>
<protein>
    <recommendedName>
        <fullName evidence="1">UPF0235 protein Paes_1868</fullName>
    </recommendedName>
</protein>